<sequence>MSQNVYIVSTARTPIGSFQGSLSSKTAVELGAAALKGALAKVPELDASKDFDEIIFGNVLSANLGQAPARQVALTAGLGNHIVATTVNKVCASAMKAIILGAQSIKCGNADVVVAGGCESMTNAPYYMPAARGGAKFGQTVLIDGVERDGLNDAYDGLAMGVHAEKCARDWDITRDQQDSFAIESYQKSQQSQKEGKFDNEIVPVTIKGFRGKPDTQVTNDEEPARLHVEKLKSARTVFQRENGTVTAANASPINDGAAAIILVSERVLKEKNLKPLAIVKGWGEAAHLPADFTWAPSLAVPKALKHAGIEDINSVDYFEFNEAFSVVGLVNTKILKLDPSKVNVYGGAVALGHPLGCSGARVVVTLLSILQQEGGKIGVAAICNGGGGASSVVIEKL</sequence>
<reference key="1">
    <citation type="journal article" date="1988" name="Curr. Genet.">
        <title>Cloning, sequencing and analysis of the yeast S. uvarum ERG10 gene encoding acetoacetyl CoA thiolase.</title>
        <authorList>
            <person name="Dequin S."/>
            <person name="Gloeckler R."/>
            <person name="Herbert C.J."/>
            <person name="Boutelet B."/>
        </authorList>
    </citation>
    <scope>NUCLEOTIDE SEQUENCE [GENOMIC DNA]</scope>
    <scope>FUNCTION</scope>
    <scope>CATALYTIC ACTIVITY</scope>
    <scope>SUBCELLULAR LOCATION</scope>
    <scope>PATHWAY</scope>
</reference>
<reference key="2">
    <citation type="journal article" date="2011" name="PLoS ONE">
        <title>Deciphering the hybridisation history leading to the Lager lineage based on the mosaic genomes of Saccharomyces bayanus strains NBRC1948 and CBS380.</title>
        <authorList>
            <person name="Nguyen H.V."/>
            <person name="Legras J.L."/>
            <person name="Neuveglise C."/>
            <person name="Gaillardin C."/>
        </authorList>
    </citation>
    <scope>NUCLEOTIDE SEQUENCE [GENOMIC DNA]</scope>
    <source>
        <strain>ATCC 76670 / Carlsberg bottom yeast no.2 / CBS 1503 / CLIB 180 / NBRC 10610 / NRRL Y-1525</strain>
    </source>
</reference>
<comment type="function">
    <text evidence="2 4">Acetyl-CoA acetyltransferase; part of the first module of ergosterol biosynthesis pathway that includes the early steps of the pathway, conserved across all eukaryotes, and which results in the formation of mevalonate from acetyl-coenzyme A (acetyl-CoA) (PubMed:2900076). In this module, the acetyl-CoA acetyltransferase ERG10 catalyzes the formation of acetoacetyl-CoA (PubMed:2900076). The hydroxymethylglutaryl-CoA synthase ERG13 then condenses acetyl-CoA with acetoacetyl-CoA to form HMG-CoA (By similarity). The rate-limiting step of the early module is the reduction to mevalonate by the 3-hydroxy-3-methylglutaryl-coenzyme A (HMG-CoA) reductases HMG1 and HMG2 which are derived from a single ancestral HMGR gene by gene duplication (By similarity).</text>
</comment>
<comment type="catalytic activity">
    <reaction evidence="3 4">
        <text>2 acetyl-CoA = acetoacetyl-CoA + CoA</text>
        <dbReference type="Rhea" id="RHEA:21036"/>
        <dbReference type="ChEBI" id="CHEBI:57286"/>
        <dbReference type="ChEBI" id="CHEBI:57287"/>
        <dbReference type="ChEBI" id="CHEBI:57288"/>
        <dbReference type="EC" id="2.3.1.9"/>
    </reaction>
</comment>
<comment type="pathway">
    <text evidence="4">Metabolic intermediate biosynthesis; (R)-mevalonate biosynthesis; (R)-mevalonate from acetyl-CoA: step 1/3.</text>
</comment>
<comment type="subunit">
    <text evidence="2">Homotetramer.</text>
</comment>
<comment type="subcellular location">
    <subcellularLocation>
        <location evidence="4">Cytoplasm</location>
    </subcellularLocation>
</comment>
<comment type="similarity">
    <text evidence="6">Belongs to the thiolase-like superfamily. Thiolase family.</text>
</comment>
<proteinExistence type="evidence at protein level"/>
<keyword id="KW-0007">Acetylation</keyword>
<keyword id="KW-0012">Acyltransferase</keyword>
<keyword id="KW-0963">Cytoplasm</keyword>
<keyword id="KW-0479">Metal-binding</keyword>
<keyword id="KW-0630">Potassium</keyword>
<keyword id="KW-0808">Transferase</keyword>
<gene>
    <name evidence="5" type="primary">ERG10</name>
</gene>
<protein>
    <recommendedName>
        <fullName evidence="5">Acetyl-CoA acetyltransferase</fullName>
        <ecNumber evidence="4">2.3.1.9</ecNumber>
    </recommendedName>
    <alternativeName>
        <fullName evidence="5">Acetoacetyl-CoA thiolase</fullName>
    </alternativeName>
    <alternativeName>
        <fullName evidence="5">Ergosterol biosynthesis protein 10</fullName>
    </alternativeName>
</protein>
<accession>P10551</accession>
<accession>F8KA90</accession>
<organism>
    <name type="scientific">Saccharomyces pastorianus (strain ATCC 76670 / Carlsberg bottom yeast no.2 / CBS 1503 / CLIB 180 / NBRC 10610 / NRRL Y-1525)</name>
    <name type="common">Saaz-type lager yeast</name>
    <name type="synonym">Saccharomyces monacensis</name>
    <dbReference type="NCBI Taxonomy" id="1429090"/>
    <lineage>
        <taxon>Eukaryota</taxon>
        <taxon>Fungi</taxon>
        <taxon>Dikarya</taxon>
        <taxon>Ascomycota</taxon>
        <taxon>Saccharomycotina</taxon>
        <taxon>Saccharomycetes</taxon>
        <taxon>Saccharomycetales</taxon>
        <taxon>Saccharomycetaceae</taxon>
        <taxon>Saccharomyces</taxon>
    </lineage>
</organism>
<dbReference type="EC" id="2.3.1.9" evidence="4"/>
<dbReference type="EMBL" id="X07976">
    <property type="protein sequence ID" value="CAA30788.1"/>
    <property type="molecule type" value="Genomic_DNA"/>
</dbReference>
<dbReference type="EMBL" id="FR845802">
    <property type="protein sequence ID" value="CCA60782.1"/>
    <property type="molecule type" value="Genomic_DNA"/>
</dbReference>
<dbReference type="SMR" id="P10551"/>
<dbReference type="UniPathway" id="UPA00058">
    <property type="reaction ID" value="UER00101"/>
</dbReference>
<dbReference type="GO" id="GO:0005739">
    <property type="term" value="C:mitochondrion"/>
    <property type="evidence" value="ECO:0007669"/>
    <property type="project" value="TreeGrafter"/>
</dbReference>
<dbReference type="GO" id="GO:0003985">
    <property type="term" value="F:acetyl-CoA C-acetyltransferase activity"/>
    <property type="evidence" value="ECO:0007669"/>
    <property type="project" value="UniProtKB-EC"/>
</dbReference>
<dbReference type="GO" id="GO:0046872">
    <property type="term" value="F:metal ion binding"/>
    <property type="evidence" value="ECO:0007669"/>
    <property type="project" value="UniProtKB-KW"/>
</dbReference>
<dbReference type="GO" id="GO:0006696">
    <property type="term" value="P:ergosterol biosynthetic process"/>
    <property type="evidence" value="ECO:0007669"/>
    <property type="project" value="TreeGrafter"/>
</dbReference>
<dbReference type="GO" id="GO:0006635">
    <property type="term" value="P:fatty acid beta-oxidation"/>
    <property type="evidence" value="ECO:0007669"/>
    <property type="project" value="TreeGrafter"/>
</dbReference>
<dbReference type="CDD" id="cd00751">
    <property type="entry name" value="thiolase"/>
    <property type="match status" value="1"/>
</dbReference>
<dbReference type="FunFam" id="3.40.47.10:FF:000007">
    <property type="entry name" value="acetyl-CoA acetyltransferase, mitochondrial"/>
    <property type="match status" value="1"/>
</dbReference>
<dbReference type="Gene3D" id="3.40.47.10">
    <property type="match status" value="1"/>
</dbReference>
<dbReference type="InterPro" id="IPR002155">
    <property type="entry name" value="Thiolase"/>
</dbReference>
<dbReference type="InterPro" id="IPR016039">
    <property type="entry name" value="Thiolase-like"/>
</dbReference>
<dbReference type="InterPro" id="IPR020615">
    <property type="entry name" value="Thiolase_acyl_enz_int_AS"/>
</dbReference>
<dbReference type="InterPro" id="IPR020610">
    <property type="entry name" value="Thiolase_AS"/>
</dbReference>
<dbReference type="InterPro" id="IPR020617">
    <property type="entry name" value="Thiolase_C"/>
</dbReference>
<dbReference type="InterPro" id="IPR020613">
    <property type="entry name" value="Thiolase_CS"/>
</dbReference>
<dbReference type="InterPro" id="IPR020616">
    <property type="entry name" value="Thiolase_N"/>
</dbReference>
<dbReference type="NCBIfam" id="TIGR01930">
    <property type="entry name" value="AcCoA-C-Actrans"/>
    <property type="match status" value="1"/>
</dbReference>
<dbReference type="PANTHER" id="PTHR18919:SF165">
    <property type="entry name" value="ACETYL-COA ACETYLTRANSFERASE"/>
    <property type="match status" value="1"/>
</dbReference>
<dbReference type="PANTHER" id="PTHR18919">
    <property type="entry name" value="ACETYL-COA C-ACYLTRANSFERASE"/>
    <property type="match status" value="1"/>
</dbReference>
<dbReference type="Pfam" id="PF02803">
    <property type="entry name" value="Thiolase_C"/>
    <property type="match status" value="1"/>
</dbReference>
<dbReference type="Pfam" id="PF00108">
    <property type="entry name" value="Thiolase_N"/>
    <property type="match status" value="1"/>
</dbReference>
<dbReference type="PIRSF" id="PIRSF000429">
    <property type="entry name" value="Ac-CoA_Ac_transf"/>
    <property type="match status" value="1"/>
</dbReference>
<dbReference type="SUPFAM" id="SSF53901">
    <property type="entry name" value="Thiolase-like"/>
    <property type="match status" value="2"/>
</dbReference>
<dbReference type="PROSITE" id="PS00098">
    <property type="entry name" value="THIOLASE_1"/>
    <property type="match status" value="1"/>
</dbReference>
<dbReference type="PROSITE" id="PS00737">
    <property type="entry name" value="THIOLASE_2"/>
    <property type="match status" value="1"/>
</dbReference>
<dbReference type="PROSITE" id="PS00099">
    <property type="entry name" value="THIOLASE_3"/>
    <property type="match status" value="1"/>
</dbReference>
<feature type="initiator methionine" description="Removed" evidence="1">
    <location>
        <position position="1"/>
    </location>
</feature>
<feature type="chain" id="PRO_0000206417" description="Acetyl-CoA acetyltransferase">
    <location>
        <begin position="2"/>
        <end position="398"/>
    </location>
</feature>
<feature type="active site" description="Acyl-thioester intermediate" evidence="1">
    <location>
        <position position="91"/>
    </location>
</feature>
<feature type="active site" description="Proton acceptor" evidence="3">
    <location>
        <position position="354"/>
    </location>
</feature>
<feature type="active site" description="Proton acceptor" evidence="3">
    <location>
        <position position="384"/>
    </location>
</feature>
<feature type="binding site" evidence="1">
    <location>
        <position position="186"/>
    </location>
    <ligand>
        <name>CoA</name>
        <dbReference type="ChEBI" id="CHEBI:57287"/>
    </ligand>
</feature>
<feature type="binding site" evidence="1">
    <location>
        <position position="186"/>
    </location>
    <ligand>
        <name>K(+)</name>
        <dbReference type="ChEBI" id="CHEBI:29103"/>
    </ligand>
</feature>
<feature type="binding site" evidence="1">
    <location>
        <position position="231"/>
    </location>
    <ligand>
        <name>CoA</name>
        <dbReference type="ChEBI" id="CHEBI:57287"/>
    </ligand>
</feature>
<feature type="binding site" evidence="1">
    <location>
        <position position="248"/>
    </location>
    <ligand>
        <name>K(+)</name>
        <dbReference type="ChEBI" id="CHEBI:29103"/>
    </ligand>
</feature>
<feature type="binding site" evidence="1">
    <location>
        <position position="249"/>
    </location>
    <ligand>
        <name>K(+)</name>
        <dbReference type="ChEBI" id="CHEBI:29103"/>
    </ligand>
</feature>
<feature type="binding site" evidence="1">
    <location>
        <position position="251"/>
    </location>
    <ligand>
        <name>K(+)</name>
        <dbReference type="ChEBI" id="CHEBI:29103"/>
    </ligand>
</feature>
<feature type="binding site" evidence="1">
    <location>
        <position position="252"/>
    </location>
    <ligand>
        <name>CoA</name>
        <dbReference type="ChEBI" id="CHEBI:57287"/>
    </ligand>
</feature>
<feature type="binding site" evidence="1">
    <location>
        <position position="350"/>
    </location>
    <ligand>
        <name>K(+)</name>
        <dbReference type="ChEBI" id="CHEBI:29103"/>
    </ligand>
</feature>
<feature type="modified residue" description="N-acetylserine" evidence="1">
    <location>
        <position position="2"/>
    </location>
</feature>
<evidence type="ECO:0000250" key="1">
    <source>
        <dbReference type="UniProtKB" id="P24752"/>
    </source>
</evidence>
<evidence type="ECO:0000250" key="2">
    <source>
        <dbReference type="UniProtKB" id="P41338"/>
    </source>
</evidence>
<evidence type="ECO:0000255" key="3">
    <source>
        <dbReference type="PROSITE-ProRule" id="PRU10020"/>
    </source>
</evidence>
<evidence type="ECO:0000269" key="4">
    <source>
    </source>
</evidence>
<evidence type="ECO:0000303" key="5">
    <source>
    </source>
</evidence>
<evidence type="ECO:0000305" key="6"/>
<name>ERG10_SACMO</name>